<comment type="function">
    <text evidence="1">Methyltransferase required for the conversion of demethylmenaquinol (DMKH2) to menaquinol (MKH2).</text>
</comment>
<comment type="catalytic activity">
    <reaction evidence="1">
        <text>a 2-demethylmenaquinol + S-adenosyl-L-methionine = a menaquinol + S-adenosyl-L-homocysteine + H(+)</text>
        <dbReference type="Rhea" id="RHEA:42640"/>
        <dbReference type="Rhea" id="RHEA-COMP:9539"/>
        <dbReference type="Rhea" id="RHEA-COMP:9563"/>
        <dbReference type="ChEBI" id="CHEBI:15378"/>
        <dbReference type="ChEBI" id="CHEBI:18151"/>
        <dbReference type="ChEBI" id="CHEBI:55437"/>
        <dbReference type="ChEBI" id="CHEBI:57856"/>
        <dbReference type="ChEBI" id="CHEBI:59789"/>
        <dbReference type="EC" id="2.1.1.163"/>
    </reaction>
</comment>
<comment type="pathway">
    <text evidence="1">Quinol/quinone metabolism; menaquinone biosynthesis; menaquinol from 1,4-dihydroxy-2-naphthoate: step 2/2.</text>
</comment>
<comment type="similarity">
    <text evidence="1">Belongs to the class I-like SAM-binding methyltransferase superfamily. MenG/UbiE family.</text>
</comment>
<dbReference type="EC" id="2.1.1.163" evidence="1"/>
<dbReference type="EMBL" id="AE014184">
    <property type="protein sequence ID" value="AAO44150.1"/>
    <property type="molecule type" value="Genomic_DNA"/>
</dbReference>
<dbReference type="SMR" id="P67064"/>
<dbReference type="STRING" id="203267.TWT_053"/>
<dbReference type="KEGG" id="twh:TWT_053"/>
<dbReference type="eggNOG" id="COG2226">
    <property type="taxonomic scope" value="Bacteria"/>
</dbReference>
<dbReference type="HOGENOM" id="CLU_037990_0_0_11"/>
<dbReference type="OrthoDB" id="9808140at2"/>
<dbReference type="UniPathway" id="UPA00079">
    <property type="reaction ID" value="UER00169"/>
</dbReference>
<dbReference type="Proteomes" id="UP000002200">
    <property type="component" value="Chromosome"/>
</dbReference>
<dbReference type="GO" id="GO:0043770">
    <property type="term" value="F:demethylmenaquinone methyltransferase activity"/>
    <property type="evidence" value="ECO:0007669"/>
    <property type="project" value="UniProtKB-UniRule"/>
</dbReference>
<dbReference type="GO" id="GO:0009234">
    <property type="term" value="P:menaquinone biosynthetic process"/>
    <property type="evidence" value="ECO:0007669"/>
    <property type="project" value="UniProtKB-UniRule"/>
</dbReference>
<dbReference type="GO" id="GO:0032259">
    <property type="term" value="P:methylation"/>
    <property type="evidence" value="ECO:0007669"/>
    <property type="project" value="UniProtKB-KW"/>
</dbReference>
<dbReference type="CDD" id="cd02440">
    <property type="entry name" value="AdoMet_MTases"/>
    <property type="match status" value="1"/>
</dbReference>
<dbReference type="Gene3D" id="3.40.50.150">
    <property type="entry name" value="Vaccinia Virus protein VP39"/>
    <property type="match status" value="1"/>
</dbReference>
<dbReference type="HAMAP" id="MF_01813">
    <property type="entry name" value="MenG_UbiE_methyltr"/>
    <property type="match status" value="1"/>
</dbReference>
<dbReference type="InterPro" id="IPR029063">
    <property type="entry name" value="SAM-dependent_MTases_sf"/>
</dbReference>
<dbReference type="InterPro" id="IPR004033">
    <property type="entry name" value="UbiE/COQ5_MeTrFase"/>
</dbReference>
<dbReference type="InterPro" id="IPR023576">
    <property type="entry name" value="UbiE/COQ5_MeTrFase_CS"/>
</dbReference>
<dbReference type="NCBIfam" id="TIGR01934">
    <property type="entry name" value="MenG_MenH_UbiE"/>
    <property type="match status" value="1"/>
</dbReference>
<dbReference type="PANTHER" id="PTHR43591:SF24">
    <property type="entry name" value="2-METHOXY-6-POLYPRENYL-1,4-BENZOQUINOL METHYLASE, MITOCHONDRIAL"/>
    <property type="match status" value="1"/>
</dbReference>
<dbReference type="PANTHER" id="PTHR43591">
    <property type="entry name" value="METHYLTRANSFERASE"/>
    <property type="match status" value="1"/>
</dbReference>
<dbReference type="Pfam" id="PF01209">
    <property type="entry name" value="Ubie_methyltran"/>
    <property type="match status" value="1"/>
</dbReference>
<dbReference type="SUPFAM" id="SSF53335">
    <property type="entry name" value="S-adenosyl-L-methionine-dependent methyltransferases"/>
    <property type="match status" value="1"/>
</dbReference>
<dbReference type="PROSITE" id="PS51608">
    <property type="entry name" value="SAM_MT_UBIE"/>
    <property type="match status" value="1"/>
</dbReference>
<dbReference type="PROSITE" id="PS01183">
    <property type="entry name" value="UBIE_1"/>
    <property type="match status" value="1"/>
</dbReference>
<dbReference type="PROSITE" id="PS01184">
    <property type="entry name" value="UBIE_2"/>
    <property type="match status" value="1"/>
</dbReference>
<accession>P67064</accession>
<accession>Q820C2</accession>
<accession>Q83H13</accession>
<reference key="1">
    <citation type="journal article" date="2003" name="Genome Res.">
        <title>Tropheryma whipplei twist: a human pathogenic Actinobacteria with a reduced genome.</title>
        <authorList>
            <person name="Raoult D."/>
            <person name="Ogata H."/>
            <person name="Audic S."/>
            <person name="Robert C."/>
            <person name="Suhre K."/>
            <person name="Drancourt M."/>
            <person name="Claverie J.-M."/>
        </authorList>
    </citation>
    <scope>NUCLEOTIDE SEQUENCE [LARGE SCALE GENOMIC DNA]</scope>
    <source>
        <strain>Twist</strain>
    </source>
</reference>
<name>MENG_TROWT</name>
<proteinExistence type="inferred from homology"/>
<feature type="chain" id="PRO_0000193345" description="Demethylmenaquinone methyltransferase">
    <location>
        <begin position="1"/>
        <end position="239"/>
    </location>
</feature>
<feature type="binding site" evidence="1">
    <location>
        <position position="68"/>
    </location>
    <ligand>
        <name>S-adenosyl-L-methionine</name>
        <dbReference type="ChEBI" id="CHEBI:59789"/>
    </ligand>
</feature>
<feature type="binding site" evidence="1">
    <location>
        <position position="86"/>
    </location>
    <ligand>
        <name>S-adenosyl-L-methionine</name>
        <dbReference type="ChEBI" id="CHEBI:59789"/>
    </ligand>
</feature>
<feature type="binding site" evidence="1">
    <location>
        <begin position="111"/>
        <end position="112"/>
    </location>
    <ligand>
        <name>S-adenosyl-L-methionine</name>
        <dbReference type="ChEBI" id="CHEBI:59789"/>
    </ligand>
</feature>
<evidence type="ECO:0000255" key="1">
    <source>
        <dbReference type="HAMAP-Rule" id="MF_01813"/>
    </source>
</evidence>
<gene>
    <name evidence="1" type="primary">menG</name>
    <name type="ordered locus">TWT_053</name>
</gene>
<sequence length="239" mass="27045">MGTNIHIDMVIHGKHTAEIRKMFNRVAQAYDRTNLVLSFLQDAHWRRAACKMLGVTAGEEVLDVGAGTGASTRTVARTGAAVTGIDISPRMLQIARNRCKRFQNITWRLTNGDLPFPDKSFDAILMVFCLRNVSNIQGFLCDAARVLKPGGRLVVCEFSHPRRFVAPFYRLYLRYVLPRLAKLISSDPAAYEYLTESIEDWYEVDELAFMLEQCGFQNTSWKRLSFGAVALHRALRGPE</sequence>
<organism>
    <name type="scientific">Tropheryma whipplei (strain Twist)</name>
    <name type="common">Whipple's bacillus</name>
    <dbReference type="NCBI Taxonomy" id="203267"/>
    <lineage>
        <taxon>Bacteria</taxon>
        <taxon>Bacillati</taxon>
        <taxon>Actinomycetota</taxon>
        <taxon>Actinomycetes</taxon>
        <taxon>Micrococcales</taxon>
        <taxon>Tropherymataceae</taxon>
        <taxon>Tropheryma</taxon>
    </lineage>
</organism>
<keyword id="KW-0474">Menaquinone biosynthesis</keyword>
<keyword id="KW-0489">Methyltransferase</keyword>
<keyword id="KW-1185">Reference proteome</keyword>
<keyword id="KW-0949">S-adenosyl-L-methionine</keyword>
<keyword id="KW-0808">Transferase</keyword>
<protein>
    <recommendedName>
        <fullName evidence="1">Demethylmenaquinone methyltransferase</fullName>
        <ecNumber evidence="1">2.1.1.163</ecNumber>
    </recommendedName>
</protein>